<proteinExistence type="inferred from homology"/>
<name>SYP_GLOC7</name>
<gene>
    <name evidence="1" type="primary">proS</name>
    <name type="ordered locus">PCC7424_1529</name>
</gene>
<reference key="1">
    <citation type="journal article" date="2011" name="MBio">
        <title>Novel metabolic attributes of the genus Cyanothece, comprising a group of unicellular nitrogen-fixing Cyanobacteria.</title>
        <authorList>
            <person name="Bandyopadhyay A."/>
            <person name="Elvitigala T."/>
            <person name="Welsh E."/>
            <person name="Stockel J."/>
            <person name="Liberton M."/>
            <person name="Min H."/>
            <person name="Sherman L.A."/>
            <person name="Pakrasi H.B."/>
        </authorList>
    </citation>
    <scope>NUCLEOTIDE SEQUENCE [LARGE SCALE GENOMIC DNA]</scope>
    <source>
        <strain>PCC 7424</strain>
    </source>
</reference>
<sequence>MRLSQMLFVTLREDPAEAEIPSHKLLLRAGYIRRIGSGIYAYLPLMWRVLQKVSQIVRQEMNATGAQECLLPQLQPSELWKESGRWDTYTKAEGIMFALEDRQERELGLGPTHEEVITFIAREMIRSYRQLPVNLYQIQTKFRDEIRPRFGLMRGREFIMKDAYSFDTDPEGLKKTYQDMDKAYRNILRRCGLAFRAVDADSGAIGGSGSQEFMVLADAGEDEVLYTDDGKYAANVEKAVSLPPDEEPSPFKNYEKRETPNTDTIEKLAQFLKCSPTVVVKNILYEAVYDNGMIVLVLVNIRGDQEVNEVKLQNELVKLAPQYHAKTIIALKVPDESAQQKWAAKSLPLGYISPDLGDDYIQGSKEIASKFVRLVDKTVVELKNFVTGANEKGYHVLGANWGKEFKLPQLIVDVRTAKAGDRAVHDRTQTLQSARGIEVGHIFQLGTKYSHAMGATYTNEQGEEMPLVMGCYGIGVSRLAQSAVEQSYDKDGIIWPVAIAPYHAIVVIPNINDPQQVEVAEKLYTELNAAGIETLLDDRDERAGVKFKDSELVGIPYRIVTGRSLKEGKLEVVERATKKSQDIPIDEVVSTIQQWVKAAL</sequence>
<keyword id="KW-0030">Aminoacyl-tRNA synthetase</keyword>
<keyword id="KW-0067">ATP-binding</keyword>
<keyword id="KW-0963">Cytoplasm</keyword>
<keyword id="KW-0436">Ligase</keyword>
<keyword id="KW-0547">Nucleotide-binding</keyword>
<keyword id="KW-0648">Protein biosynthesis</keyword>
<keyword id="KW-1185">Reference proteome</keyword>
<comment type="function">
    <text evidence="1">Catalyzes the attachment of proline to tRNA(Pro) in a two-step reaction: proline is first activated by ATP to form Pro-AMP and then transferred to the acceptor end of tRNA(Pro). As ProRS can inadvertently accommodate and process non-cognate amino acids such as alanine and cysteine, to avoid such errors it has two additional distinct editing activities against alanine. One activity is designated as 'pretransfer' editing and involves the tRNA(Pro)-independent hydrolysis of activated Ala-AMP. The other activity is designated 'posttransfer' editing and involves deacylation of mischarged Ala-tRNA(Pro). The misacylated Cys-tRNA(Pro) is not edited by ProRS.</text>
</comment>
<comment type="catalytic activity">
    <reaction evidence="1">
        <text>tRNA(Pro) + L-proline + ATP = L-prolyl-tRNA(Pro) + AMP + diphosphate</text>
        <dbReference type="Rhea" id="RHEA:14305"/>
        <dbReference type="Rhea" id="RHEA-COMP:9700"/>
        <dbReference type="Rhea" id="RHEA-COMP:9702"/>
        <dbReference type="ChEBI" id="CHEBI:30616"/>
        <dbReference type="ChEBI" id="CHEBI:33019"/>
        <dbReference type="ChEBI" id="CHEBI:60039"/>
        <dbReference type="ChEBI" id="CHEBI:78442"/>
        <dbReference type="ChEBI" id="CHEBI:78532"/>
        <dbReference type="ChEBI" id="CHEBI:456215"/>
        <dbReference type="EC" id="6.1.1.15"/>
    </reaction>
</comment>
<comment type="subunit">
    <text evidence="1">Homodimer.</text>
</comment>
<comment type="subcellular location">
    <subcellularLocation>
        <location evidence="1">Cytoplasm</location>
    </subcellularLocation>
</comment>
<comment type="domain">
    <text evidence="1">Consists of three domains: the N-terminal catalytic domain, the editing domain and the C-terminal anticodon-binding domain.</text>
</comment>
<comment type="similarity">
    <text evidence="1">Belongs to the class-II aminoacyl-tRNA synthetase family. ProS type 1 subfamily.</text>
</comment>
<dbReference type="EC" id="6.1.1.15" evidence="1"/>
<dbReference type="EMBL" id="CP001291">
    <property type="protein sequence ID" value="ACK69969.1"/>
    <property type="molecule type" value="Genomic_DNA"/>
</dbReference>
<dbReference type="RefSeq" id="WP_012598914.1">
    <property type="nucleotide sequence ID" value="NC_011729.1"/>
</dbReference>
<dbReference type="SMR" id="B7K9K1"/>
<dbReference type="STRING" id="65393.PCC7424_1529"/>
<dbReference type="KEGG" id="cyc:PCC7424_1529"/>
<dbReference type="eggNOG" id="COG0442">
    <property type="taxonomic scope" value="Bacteria"/>
</dbReference>
<dbReference type="HOGENOM" id="CLU_016739_0_0_3"/>
<dbReference type="OrthoDB" id="9809052at2"/>
<dbReference type="Proteomes" id="UP000002384">
    <property type="component" value="Chromosome"/>
</dbReference>
<dbReference type="GO" id="GO:0005829">
    <property type="term" value="C:cytosol"/>
    <property type="evidence" value="ECO:0007669"/>
    <property type="project" value="TreeGrafter"/>
</dbReference>
<dbReference type="GO" id="GO:0002161">
    <property type="term" value="F:aminoacyl-tRNA deacylase activity"/>
    <property type="evidence" value="ECO:0007669"/>
    <property type="project" value="InterPro"/>
</dbReference>
<dbReference type="GO" id="GO:0005524">
    <property type="term" value="F:ATP binding"/>
    <property type="evidence" value="ECO:0007669"/>
    <property type="project" value="UniProtKB-UniRule"/>
</dbReference>
<dbReference type="GO" id="GO:0004827">
    <property type="term" value="F:proline-tRNA ligase activity"/>
    <property type="evidence" value="ECO:0007669"/>
    <property type="project" value="UniProtKB-UniRule"/>
</dbReference>
<dbReference type="GO" id="GO:0006433">
    <property type="term" value="P:prolyl-tRNA aminoacylation"/>
    <property type="evidence" value="ECO:0007669"/>
    <property type="project" value="UniProtKB-UniRule"/>
</dbReference>
<dbReference type="CDD" id="cd04334">
    <property type="entry name" value="ProRS-INS"/>
    <property type="match status" value="1"/>
</dbReference>
<dbReference type="CDD" id="cd00861">
    <property type="entry name" value="ProRS_anticodon_short"/>
    <property type="match status" value="1"/>
</dbReference>
<dbReference type="CDD" id="cd00779">
    <property type="entry name" value="ProRS_core_prok"/>
    <property type="match status" value="1"/>
</dbReference>
<dbReference type="FunFam" id="3.30.930.10:FF:000167">
    <property type="entry name" value="Proline--tRNA ligase"/>
    <property type="match status" value="1"/>
</dbReference>
<dbReference type="FunFam" id="3.40.50.800:FF:000011">
    <property type="entry name" value="Proline--tRNA ligase"/>
    <property type="match status" value="1"/>
</dbReference>
<dbReference type="Gene3D" id="3.40.50.800">
    <property type="entry name" value="Anticodon-binding domain"/>
    <property type="match status" value="1"/>
</dbReference>
<dbReference type="Gene3D" id="3.30.930.10">
    <property type="entry name" value="Bira Bifunctional Protein, Domain 2"/>
    <property type="match status" value="2"/>
</dbReference>
<dbReference type="HAMAP" id="MF_01569">
    <property type="entry name" value="Pro_tRNA_synth_type1"/>
    <property type="match status" value="1"/>
</dbReference>
<dbReference type="InterPro" id="IPR002314">
    <property type="entry name" value="aa-tRNA-synt_IIb"/>
</dbReference>
<dbReference type="InterPro" id="IPR006195">
    <property type="entry name" value="aa-tRNA-synth_II"/>
</dbReference>
<dbReference type="InterPro" id="IPR045864">
    <property type="entry name" value="aa-tRNA-synth_II/BPL/LPL"/>
</dbReference>
<dbReference type="InterPro" id="IPR004154">
    <property type="entry name" value="Anticodon-bd"/>
</dbReference>
<dbReference type="InterPro" id="IPR036621">
    <property type="entry name" value="Anticodon-bd_dom_sf"/>
</dbReference>
<dbReference type="InterPro" id="IPR001387">
    <property type="entry name" value="Cro/C1-type_HTH"/>
</dbReference>
<dbReference type="InterPro" id="IPR002316">
    <property type="entry name" value="Pro-tRNA-ligase_IIa"/>
</dbReference>
<dbReference type="InterPro" id="IPR004500">
    <property type="entry name" value="Pro-tRNA-synth_IIa_bac-type"/>
</dbReference>
<dbReference type="InterPro" id="IPR023717">
    <property type="entry name" value="Pro-tRNA-Synthase_IIa_type1"/>
</dbReference>
<dbReference type="InterPro" id="IPR050062">
    <property type="entry name" value="Pro-tRNA_synthetase"/>
</dbReference>
<dbReference type="InterPro" id="IPR044140">
    <property type="entry name" value="ProRS_anticodon_short"/>
</dbReference>
<dbReference type="InterPro" id="IPR033730">
    <property type="entry name" value="ProRS_core_prok"/>
</dbReference>
<dbReference type="InterPro" id="IPR036754">
    <property type="entry name" value="YbaK/aa-tRNA-synt-asso_dom_sf"/>
</dbReference>
<dbReference type="InterPro" id="IPR007214">
    <property type="entry name" value="YbaK/aa-tRNA-synth-assoc-dom"/>
</dbReference>
<dbReference type="NCBIfam" id="NF006625">
    <property type="entry name" value="PRK09194.1"/>
    <property type="match status" value="1"/>
</dbReference>
<dbReference type="NCBIfam" id="TIGR00409">
    <property type="entry name" value="proS_fam_II"/>
    <property type="match status" value="1"/>
</dbReference>
<dbReference type="PANTHER" id="PTHR42753">
    <property type="entry name" value="MITOCHONDRIAL RIBOSOME PROTEIN L39/PROLYL-TRNA LIGASE FAMILY MEMBER"/>
    <property type="match status" value="1"/>
</dbReference>
<dbReference type="PANTHER" id="PTHR42753:SF2">
    <property type="entry name" value="PROLINE--TRNA LIGASE"/>
    <property type="match status" value="1"/>
</dbReference>
<dbReference type="Pfam" id="PF03129">
    <property type="entry name" value="HGTP_anticodon"/>
    <property type="match status" value="1"/>
</dbReference>
<dbReference type="Pfam" id="PF00587">
    <property type="entry name" value="tRNA-synt_2b"/>
    <property type="match status" value="1"/>
</dbReference>
<dbReference type="Pfam" id="PF04073">
    <property type="entry name" value="tRNA_edit"/>
    <property type="match status" value="1"/>
</dbReference>
<dbReference type="PRINTS" id="PR01046">
    <property type="entry name" value="TRNASYNTHPRO"/>
</dbReference>
<dbReference type="SUPFAM" id="SSF52954">
    <property type="entry name" value="Class II aaRS ABD-related"/>
    <property type="match status" value="1"/>
</dbReference>
<dbReference type="SUPFAM" id="SSF55681">
    <property type="entry name" value="Class II aaRS and biotin synthetases"/>
    <property type="match status" value="1"/>
</dbReference>
<dbReference type="SUPFAM" id="SSF55826">
    <property type="entry name" value="YbaK/ProRS associated domain"/>
    <property type="match status" value="1"/>
</dbReference>
<dbReference type="PROSITE" id="PS50862">
    <property type="entry name" value="AA_TRNA_LIGASE_II"/>
    <property type="match status" value="1"/>
</dbReference>
<feature type="chain" id="PRO_1000199370" description="Proline--tRNA ligase">
    <location>
        <begin position="1"/>
        <end position="600"/>
    </location>
</feature>
<accession>B7K9K1</accession>
<protein>
    <recommendedName>
        <fullName evidence="1">Proline--tRNA ligase</fullName>
        <ecNumber evidence="1">6.1.1.15</ecNumber>
    </recommendedName>
    <alternativeName>
        <fullName evidence="1">Prolyl-tRNA synthetase</fullName>
        <shortName evidence="1">ProRS</shortName>
    </alternativeName>
</protein>
<evidence type="ECO:0000255" key="1">
    <source>
        <dbReference type="HAMAP-Rule" id="MF_01569"/>
    </source>
</evidence>
<organism>
    <name type="scientific">Gloeothece citriformis (strain PCC 7424)</name>
    <name type="common">Cyanothece sp. (strain PCC 7424)</name>
    <dbReference type="NCBI Taxonomy" id="65393"/>
    <lineage>
        <taxon>Bacteria</taxon>
        <taxon>Bacillati</taxon>
        <taxon>Cyanobacteriota</taxon>
        <taxon>Cyanophyceae</taxon>
        <taxon>Oscillatoriophycideae</taxon>
        <taxon>Chroococcales</taxon>
        <taxon>Aphanothecaceae</taxon>
        <taxon>Gloeothece</taxon>
        <taxon>Gloeothece citriformis</taxon>
    </lineage>
</organism>